<reference key="1">
    <citation type="journal article" date="2004" name="Nat. Genet.">
        <title>Comparison of genome degradation in Paratyphi A and Typhi, human-restricted serovars of Salmonella enterica that cause typhoid.</title>
        <authorList>
            <person name="McClelland M."/>
            <person name="Sanderson K.E."/>
            <person name="Clifton S.W."/>
            <person name="Latreille P."/>
            <person name="Porwollik S."/>
            <person name="Sabo A."/>
            <person name="Meyer R."/>
            <person name="Bieri T."/>
            <person name="Ozersky P."/>
            <person name="McLellan M."/>
            <person name="Harkins C.R."/>
            <person name="Wang C."/>
            <person name="Nguyen C."/>
            <person name="Berghoff A."/>
            <person name="Elliott G."/>
            <person name="Kohlberg S."/>
            <person name="Strong C."/>
            <person name="Du F."/>
            <person name="Carter J."/>
            <person name="Kremizki C."/>
            <person name="Layman D."/>
            <person name="Leonard S."/>
            <person name="Sun H."/>
            <person name="Fulton L."/>
            <person name="Nash W."/>
            <person name="Miner T."/>
            <person name="Minx P."/>
            <person name="Delehaunty K."/>
            <person name="Fronick C."/>
            <person name="Magrini V."/>
            <person name="Nhan M."/>
            <person name="Warren W."/>
            <person name="Florea L."/>
            <person name="Spieth J."/>
            <person name="Wilson R.K."/>
        </authorList>
    </citation>
    <scope>NUCLEOTIDE SEQUENCE [LARGE SCALE GENOMIC DNA]</scope>
    <source>
        <strain>ATCC 9150 / SARB42</strain>
    </source>
</reference>
<proteinExistence type="inferred from homology"/>
<name>ZAPB_SALPA</name>
<protein>
    <recommendedName>
        <fullName evidence="1">Cell division protein ZapB</fullName>
    </recommendedName>
</protein>
<dbReference type="EMBL" id="CP000026">
    <property type="protein sequence ID" value="AAV79695.1"/>
    <property type="molecule type" value="Genomic_DNA"/>
</dbReference>
<dbReference type="RefSeq" id="WP_000051370.1">
    <property type="nucleotide sequence ID" value="NC_006511.1"/>
</dbReference>
<dbReference type="SMR" id="Q5PIS1"/>
<dbReference type="KEGG" id="spt:SPA3931"/>
<dbReference type="HOGENOM" id="CLU_171174_2_0_6"/>
<dbReference type="Proteomes" id="UP000008185">
    <property type="component" value="Chromosome"/>
</dbReference>
<dbReference type="GO" id="GO:0005737">
    <property type="term" value="C:cytoplasm"/>
    <property type="evidence" value="ECO:0007669"/>
    <property type="project" value="UniProtKB-SubCell"/>
</dbReference>
<dbReference type="GO" id="GO:0000917">
    <property type="term" value="P:division septum assembly"/>
    <property type="evidence" value="ECO:0007669"/>
    <property type="project" value="UniProtKB-KW"/>
</dbReference>
<dbReference type="GO" id="GO:0043093">
    <property type="term" value="P:FtsZ-dependent cytokinesis"/>
    <property type="evidence" value="ECO:0007669"/>
    <property type="project" value="UniProtKB-UniRule"/>
</dbReference>
<dbReference type="FunFam" id="1.20.5.340:FF:000014">
    <property type="entry name" value="Cell division protein ZapB"/>
    <property type="match status" value="1"/>
</dbReference>
<dbReference type="Gene3D" id="1.20.5.340">
    <property type="match status" value="1"/>
</dbReference>
<dbReference type="HAMAP" id="MF_01196">
    <property type="entry name" value="ZapB"/>
    <property type="match status" value="1"/>
</dbReference>
<dbReference type="InterPro" id="IPR009252">
    <property type="entry name" value="Cell_div_ZapB"/>
</dbReference>
<dbReference type="NCBIfam" id="NF011951">
    <property type="entry name" value="PRK15422.1"/>
    <property type="match status" value="1"/>
</dbReference>
<dbReference type="Pfam" id="PF06005">
    <property type="entry name" value="ZapB"/>
    <property type="match status" value="1"/>
</dbReference>
<evidence type="ECO:0000255" key="1">
    <source>
        <dbReference type="HAMAP-Rule" id="MF_01196"/>
    </source>
</evidence>
<evidence type="ECO:0000256" key="2">
    <source>
        <dbReference type="SAM" id="MobiDB-lite"/>
    </source>
</evidence>
<accession>Q5PIS1</accession>
<gene>
    <name evidence="1" type="primary">zapB</name>
    <name type="ordered locus">SPA3931</name>
</gene>
<sequence>MSLEVFEKLEAKVQQAIDTITLLQMEIEELKEKNNSLTQEVQSAQHQREELERENNSLKEQQSGWQERLQALLGRMEEV</sequence>
<feature type="chain" id="PRO_0000333916" description="Cell division protein ZapB">
    <location>
        <begin position="1"/>
        <end position="79"/>
    </location>
</feature>
<feature type="region of interest" description="Disordered" evidence="2">
    <location>
        <begin position="36"/>
        <end position="63"/>
    </location>
</feature>
<feature type="coiled-coil region" evidence="1">
    <location>
        <begin position="3"/>
        <end position="79"/>
    </location>
</feature>
<feature type="compositionally biased region" description="Polar residues" evidence="2">
    <location>
        <begin position="36"/>
        <end position="45"/>
    </location>
</feature>
<feature type="compositionally biased region" description="Basic and acidic residues" evidence="2">
    <location>
        <begin position="46"/>
        <end position="57"/>
    </location>
</feature>
<keyword id="KW-0131">Cell cycle</keyword>
<keyword id="KW-0132">Cell division</keyword>
<keyword id="KW-0175">Coiled coil</keyword>
<keyword id="KW-0963">Cytoplasm</keyword>
<keyword id="KW-0717">Septation</keyword>
<organism>
    <name type="scientific">Salmonella paratyphi A (strain ATCC 9150 / SARB42)</name>
    <dbReference type="NCBI Taxonomy" id="295319"/>
    <lineage>
        <taxon>Bacteria</taxon>
        <taxon>Pseudomonadati</taxon>
        <taxon>Pseudomonadota</taxon>
        <taxon>Gammaproteobacteria</taxon>
        <taxon>Enterobacterales</taxon>
        <taxon>Enterobacteriaceae</taxon>
        <taxon>Salmonella</taxon>
    </lineage>
</organism>
<comment type="function">
    <text evidence="1">Non-essential, abundant cell division factor that is required for proper Z-ring formation. It is recruited early to the divisome by direct interaction with FtsZ, stimulating Z-ring assembly and thereby promoting cell division earlier in the cell cycle. Its recruitment to the Z-ring requires functional FtsA or ZipA.</text>
</comment>
<comment type="subunit">
    <text evidence="1">Homodimer. The ends of the coiled-coil dimer bind to each other, forming polymers. Interacts with FtsZ.</text>
</comment>
<comment type="subcellular location">
    <subcellularLocation>
        <location>Cytoplasm</location>
    </subcellularLocation>
    <text evidence="1">Localizes to the septum at mid-cell, in a FtsZ-like pattern.</text>
</comment>
<comment type="similarity">
    <text evidence="1">Belongs to the ZapB family.</text>
</comment>